<name>PLAP_ECOLI</name>
<dbReference type="EMBL" id="U00009">
    <property type="protein sequence ID" value="AAA16420.1"/>
    <property type="status" value="ALT_INIT"/>
    <property type="molecule type" value="Genomic_DNA"/>
</dbReference>
<dbReference type="EMBL" id="U00096">
    <property type="protein sequence ID" value="AAC75075.2"/>
    <property type="molecule type" value="Genomic_DNA"/>
</dbReference>
<dbReference type="EMBL" id="AP009048">
    <property type="protein sequence ID" value="BAA15842.2"/>
    <property type="molecule type" value="Genomic_DNA"/>
</dbReference>
<dbReference type="PIR" id="E64966">
    <property type="entry name" value="E64966"/>
</dbReference>
<dbReference type="RefSeq" id="NP_416518.2">
    <property type="nucleotide sequence ID" value="NC_000913.3"/>
</dbReference>
<dbReference type="RefSeq" id="WP_000019197.1">
    <property type="nucleotide sequence ID" value="NZ_STEB01000048.1"/>
</dbReference>
<dbReference type="SMR" id="P0AA47"/>
<dbReference type="BioGRID" id="4260417">
    <property type="interactions" value="173"/>
</dbReference>
<dbReference type="FunCoup" id="P0AA47">
    <property type="interactions" value="184"/>
</dbReference>
<dbReference type="IntAct" id="P0AA47">
    <property type="interactions" value="1"/>
</dbReference>
<dbReference type="STRING" id="511145.b2014"/>
<dbReference type="TCDB" id="2.A.3.1.14">
    <property type="family name" value="the amino acid-polyamine-organocation (apc) family"/>
</dbReference>
<dbReference type="PaxDb" id="511145-b2014"/>
<dbReference type="EnsemblBacteria" id="AAC75075">
    <property type="protein sequence ID" value="AAC75075"/>
    <property type="gene ID" value="b2014"/>
</dbReference>
<dbReference type="GeneID" id="93775161"/>
<dbReference type="GeneID" id="946533"/>
<dbReference type="KEGG" id="ecj:JW5330"/>
<dbReference type="KEGG" id="eco:b2014"/>
<dbReference type="KEGG" id="ecoc:C3026_11360"/>
<dbReference type="PATRIC" id="fig|1411691.4.peg.238"/>
<dbReference type="EchoBASE" id="EB1842"/>
<dbReference type="eggNOG" id="COG0531">
    <property type="taxonomic scope" value="Bacteria"/>
</dbReference>
<dbReference type="HOGENOM" id="CLU_007946_6_0_6"/>
<dbReference type="InParanoid" id="P0AA47"/>
<dbReference type="OMA" id="WILGWDL"/>
<dbReference type="OrthoDB" id="9804700at2"/>
<dbReference type="PhylomeDB" id="P0AA47"/>
<dbReference type="BioCyc" id="EcoCyc:YEEF-MONOMER"/>
<dbReference type="BioCyc" id="MetaCyc:YEEF-MONOMER"/>
<dbReference type="PRO" id="PR:P0AA47"/>
<dbReference type="Proteomes" id="UP000000625">
    <property type="component" value="Chromosome"/>
</dbReference>
<dbReference type="GO" id="GO:0005886">
    <property type="term" value="C:plasma membrane"/>
    <property type="evidence" value="ECO:0000314"/>
    <property type="project" value="EcoCyc"/>
</dbReference>
<dbReference type="GO" id="GO:0015489">
    <property type="term" value="F:putrescine transmembrane transporter activity"/>
    <property type="evidence" value="ECO:0000315"/>
    <property type="project" value="EcoCyc"/>
</dbReference>
<dbReference type="GO" id="GO:0015295">
    <property type="term" value="F:solute:proton symporter activity"/>
    <property type="evidence" value="ECO:0000314"/>
    <property type="project" value="EcoCyc"/>
</dbReference>
<dbReference type="GO" id="GO:0006865">
    <property type="term" value="P:amino acid transport"/>
    <property type="evidence" value="ECO:0007669"/>
    <property type="project" value="UniProtKB-KW"/>
</dbReference>
<dbReference type="GO" id="GO:0048870">
    <property type="term" value="P:cell motility"/>
    <property type="evidence" value="ECO:0000315"/>
    <property type="project" value="EcoCyc"/>
</dbReference>
<dbReference type="GO" id="GO:0015847">
    <property type="term" value="P:putrescine transport"/>
    <property type="evidence" value="ECO:0000315"/>
    <property type="project" value="EcoCyc"/>
</dbReference>
<dbReference type="FunFam" id="1.20.1740.10:FF:000007">
    <property type="entry name" value="APC family permease"/>
    <property type="match status" value="1"/>
</dbReference>
<dbReference type="Gene3D" id="1.20.1740.10">
    <property type="entry name" value="Amino acid/polyamine transporter I"/>
    <property type="match status" value="1"/>
</dbReference>
<dbReference type="InterPro" id="IPR004841">
    <property type="entry name" value="AA-permease/SLC12A_dom"/>
</dbReference>
<dbReference type="InterPro" id="IPR050367">
    <property type="entry name" value="APC_superfamily"/>
</dbReference>
<dbReference type="PANTHER" id="PTHR42770">
    <property type="entry name" value="AMINO ACID TRANSPORTER-RELATED"/>
    <property type="match status" value="1"/>
</dbReference>
<dbReference type="PANTHER" id="PTHR42770:SF1">
    <property type="entry name" value="LOW-AFFINITY PUTRESCINE IMPORTER PLAP"/>
    <property type="match status" value="1"/>
</dbReference>
<dbReference type="Pfam" id="PF00324">
    <property type="entry name" value="AA_permease"/>
    <property type="match status" value="1"/>
</dbReference>
<dbReference type="PIRSF" id="PIRSF006060">
    <property type="entry name" value="AA_transporter"/>
    <property type="match status" value="1"/>
</dbReference>
<accession>P0AA47</accession>
<accession>P33016</accession>
<feature type="chain" id="PRO_0000054215" description="Low-affinity putrescine importer PlaP">
    <location>
        <begin position="1"/>
        <end position="452"/>
    </location>
</feature>
<feature type="topological domain" description="Cytoplasmic" evidence="5">
    <location>
        <begin position="1"/>
        <end position="16"/>
    </location>
</feature>
<feature type="transmembrane region" description="Helical" evidence="1">
    <location>
        <begin position="17"/>
        <end position="37"/>
    </location>
</feature>
<feature type="topological domain" description="Periplasmic" evidence="5">
    <location>
        <begin position="38"/>
        <end position="48"/>
    </location>
</feature>
<feature type="transmembrane region" description="Helical" evidence="1">
    <location>
        <begin position="49"/>
        <end position="69"/>
    </location>
</feature>
<feature type="topological domain" description="Cytoplasmic" evidence="5">
    <location>
        <begin position="70"/>
        <end position="95"/>
    </location>
</feature>
<feature type="transmembrane region" description="Helical" evidence="1">
    <location>
        <begin position="96"/>
        <end position="116"/>
    </location>
</feature>
<feature type="topological domain" description="Periplasmic" evidence="5">
    <location>
        <begin position="117"/>
        <end position="123"/>
    </location>
</feature>
<feature type="transmembrane region" description="Helical" evidence="1">
    <location>
        <begin position="124"/>
        <end position="144"/>
    </location>
</feature>
<feature type="topological domain" description="Cytoplasmic" evidence="5">
    <location>
        <begin position="145"/>
        <end position="158"/>
    </location>
</feature>
<feature type="transmembrane region" description="Helical" evidence="1">
    <location>
        <begin position="159"/>
        <end position="179"/>
    </location>
</feature>
<feature type="topological domain" description="Periplasmic" evidence="5">
    <location>
        <begin position="180"/>
        <end position="199"/>
    </location>
</feature>
<feature type="transmembrane region" description="Helical" evidence="1">
    <location>
        <begin position="200"/>
        <end position="220"/>
    </location>
</feature>
<feature type="topological domain" description="Cytoplasmic" evidence="5">
    <location>
        <begin position="221"/>
        <end position="237"/>
    </location>
</feature>
<feature type="transmembrane region" description="Helical" evidence="1">
    <location>
        <begin position="238"/>
        <end position="258"/>
    </location>
</feature>
<feature type="topological domain" description="Periplasmic" evidence="5">
    <location>
        <begin position="259"/>
        <end position="283"/>
    </location>
</feature>
<feature type="transmembrane region" description="Helical" evidence="1">
    <location>
        <begin position="284"/>
        <end position="304"/>
    </location>
</feature>
<feature type="topological domain" description="Cytoplasmic" evidence="5">
    <location>
        <begin position="305"/>
        <end position="339"/>
    </location>
</feature>
<feature type="transmembrane region" description="Helical" evidence="1">
    <location>
        <begin position="340"/>
        <end position="360"/>
    </location>
</feature>
<feature type="transmembrane region" description="Helical" evidence="1">
    <location>
        <begin position="361"/>
        <end position="381"/>
    </location>
</feature>
<feature type="topological domain" description="Cytoplasmic" evidence="5">
    <location>
        <begin position="382"/>
        <end position="394"/>
    </location>
</feature>
<feature type="transmembrane region" description="Helical" evidence="1">
    <location>
        <begin position="395"/>
        <end position="415"/>
    </location>
</feature>
<feature type="topological domain" description="Periplasmic" evidence="5">
    <location>
        <begin position="416"/>
        <end position="417"/>
    </location>
</feature>
<feature type="transmembrane region" description="Helical" evidence="1">
    <location>
        <begin position="418"/>
        <end position="438"/>
    </location>
</feature>
<feature type="topological domain" description="Cytoplasmic" evidence="2">
    <location>
        <begin position="439"/>
        <end position="452"/>
    </location>
</feature>
<gene>
    <name evidence="4" type="primary">plaP</name>
    <name type="synonym">yeeF</name>
    <name type="ordered locus">b2014</name>
    <name type="ordered locus">JW5330</name>
</gene>
<protein>
    <recommendedName>
        <fullName evidence="5">Low-affinity putrescine importer PlaP</fullName>
    </recommendedName>
    <alternativeName>
        <fullName evidence="4">Putrescine low affinity permease</fullName>
    </alternativeName>
</protein>
<proteinExistence type="evidence at protein level"/>
<evidence type="ECO:0000255" key="1"/>
<evidence type="ECO:0000269" key="2">
    <source>
    </source>
</evidence>
<evidence type="ECO:0000269" key="3">
    <source>
    </source>
</evidence>
<evidence type="ECO:0000303" key="4">
    <source>
    </source>
</evidence>
<evidence type="ECO:0000305" key="5"/>
<evidence type="ECO:0000305" key="6">
    <source>
    </source>
</evidence>
<sequence>MSHNVTPNTSRVELRKTLTLVPVVMMGLAYMQPMTLFDTFGIVSGLTDGHVPTAYAFALIAILFTALSYGKLVRRYPSAGSAYTYAQKSISPTVGFMVGWSSLLDYLFAPMINILLAKIYFEALVPSIPSWMFVVALVAFMTAFNLRSLKSVANFNTVIVVLQVVLIAVILGMVVYGVFEGEGAGTLASTRPFWSGDAHVIPMITGATILCFSFTGFDGISNLSEETKDAERVIPRAIFLTALIGGMIFIFATYFLQLYFPDISRFKDPDASQPEIMLYVAGKAFQVGALIFSTITVLASGMAAHAGVARLMYVMGRDGVFPKSFFGYVHPKWRTPAMNIILVGAIALLAINFDLVMATALINFGALVAFTFVNLSVISQFWIREKRNKTLKDHFQYLFLPMCGALTVGALWVNLEESSMVLGLIWAAIGLIYLACVTKSFRNPVPQYEDVA</sequence>
<organism>
    <name type="scientific">Escherichia coli (strain K12)</name>
    <dbReference type="NCBI Taxonomy" id="83333"/>
    <lineage>
        <taxon>Bacteria</taxon>
        <taxon>Pseudomonadati</taxon>
        <taxon>Pseudomonadota</taxon>
        <taxon>Gammaproteobacteria</taxon>
        <taxon>Enterobacterales</taxon>
        <taxon>Enterobacteriaceae</taxon>
        <taxon>Escherichia</taxon>
    </lineage>
</organism>
<keyword id="KW-0029">Amino-acid transport</keyword>
<keyword id="KW-0997">Cell inner membrane</keyword>
<keyword id="KW-1003">Cell membrane</keyword>
<keyword id="KW-0472">Membrane</keyword>
<keyword id="KW-1185">Reference proteome</keyword>
<keyword id="KW-0769">Symport</keyword>
<keyword id="KW-0812">Transmembrane</keyword>
<keyword id="KW-1133">Transmembrane helix</keyword>
<keyword id="KW-0813">Transport</keyword>
<comment type="function">
    <text evidence="3">Putrescine importer. Required for induction of type 1 pili-driven surface motility.</text>
</comment>
<comment type="catalytic activity">
    <reaction evidence="6">
        <text>putrescine(in) + H(+)(in) = putrescine(out) + H(+)(out)</text>
        <dbReference type="Rhea" id="RHEA:28891"/>
        <dbReference type="ChEBI" id="CHEBI:15378"/>
        <dbReference type="ChEBI" id="CHEBI:326268"/>
    </reaction>
    <physiologicalReaction direction="right-to-left" evidence="6">
        <dbReference type="Rhea" id="RHEA:28893"/>
    </physiologicalReaction>
</comment>
<comment type="activity regulation">
    <text evidence="3">Putrescine uptake is inhibited by carbonyl cyanide m-chlorophenylhydrazone (CCCP), which dissipates the proton motive force.</text>
</comment>
<comment type="biophysicochemical properties">
    <kinetics>
        <KM evidence="3">155 uM for putrescine</KM>
        <Vmax evidence="3">9.3 nmol/min/mg enzyme</Vmax>
    </kinetics>
</comment>
<comment type="subcellular location">
    <subcellularLocation>
        <location evidence="2">Cell inner membrane</location>
        <topology evidence="1">Multi-pass membrane protein</topology>
    </subcellularLocation>
</comment>
<comment type="similarity">
    <text evidence="5">Belongs to the amino acid-polyamine-organocation (APC) superfamily.</text>
</comment>
<comment type="sequence caution" evidence="5">
    <conflict type="erroneous initiation">
        <sequence resource="EMBL-CDS" id="AAA16420"/>
    </conflict>
    <text>Extended N-terminus.</text>
</comment>
<reference key="1">
    <citation type="submission" date="1993-10" db="EMBL/GenBank/DDBJ databases">
        <title>Automated multiplex sequencing of the E.coli genome.</title>
        <authorList>
            <person name="Richterich P."/>
            <person name="Lakey N."/>
            <person name="Gryan G."/>
            <person name="Jaehn L."/>
            <person name="Mintz L."/>
            <person name="Robison K."/>
            <person name="Church G.M."/>
        </authorList>
    </citation>
    <scope>NUCLEOTIDE SEQUENCE [LARGE SCALE GENOMIC DNA]</scope>
    <source>
        <strain>K12 / BHB2600</strain>
    </source>
</reference>
<reference key="2">
    <citation type="journal article" date="1996" name="DNA Res.">
        <title>A 460-kb DNA sequence of the Escherichia coli K-12 genome corresponding to the 40.1-50.0 min region on the linkage map.</title>
        <authorList>
            <person name="Itoh T."/>
            <person name="Aiba H."/>
            <person name="Baba T."/>
            <person name="Fujita K."/>
            <person name="Hayashi K."/>
            <person name="Inada T."/>
            <person name="Isono K."/>
            <person name="Kasai H."/>
            <person name="Kimura S."/>
            <person name="Kitakawa M."/>
            <person name="Kitagawa M."/>
            <person name="Makino K."/>
            <person name="Miki T."/>
            <person name="Mizobuchi K."/>
            <person name="Mori H."/>
            <person name="Mori T."/>
            <person name="Motomura K."/>
            <person name="Nakade S."/>
            <person name="Nakamura Y."/>
            <person name="Nashimoto H."/>
            <person name="Nishio Y."/>
            <person name="Oshima T."/>
            <person name="Saito N."/>
            <person name="Sampei G."/>
            <person name="Seki Y."/>
            <person name="Sivasundaram S."/>
            <person name="Tagami H."/>
            <person name="Takeda J."/>
            <person name="Takemoto K."/>
            <person name="Wada C."/>
            <person name="Yamamoto Y."/>
            <person name="Horiuchi T."/>
        </authorList>
    </citation>
    <scope>NUCLEOTIDE SEQUENCE [LARGE SCALE GENOMIC DNA]</scope>
    <source>
        <strain>K12 / W3110 / ATCC 27325 / DSM 5911</strain>
    </source>
</reference>
<reference key="3">
    <citation type="journal article" date="1997" name="Science">
        <title>The complete genome sequence of Escherichia coli K-12.</title>
        <authorList>
            <person name="Blattner F.R."/>
            <person name="Plunkett G. III"/>
            <person name="Bloch C.A."/>
            <person name="Perna N.T."/>
            <person name="Burland V."/>
            <person name="Riley M."/>
            <person name="Collado-Vides J."/>
            <person name="Glasner J.D."/>
            <person name="Rode C.K."/>
            <person name="Mayhew G.F."/>
            <person name="Gregor J."/>
            <person name="Davis N.W."/>
            <person name="Kirkpatrick H.A."/>
            <person name="Goeden M.A."/>
            <person name="Rose D.J."/>
            <person name="Mau B."/>
            <person name="Shao Y."/>
        </authorList>
    </citation>
    <scope>NUCLEOTIDE SEQUENCE [LARGE SCALE GENOMIC DNA]</scope>
    <source>
        <strain>K12 / MG1655 / ATCC 47076</strain>
    </source>
</reference>
<reference key="4">
    <citation type="journal article" date="2006" name="Mol. Syst. Biol.">
        <title>Highly accurate genome sequences of Escherichia coli K-12 strains MG1655 and W3110.</title>
        <authorList>
            <person name="Hayashi K."/>
            <person name="Morooka N."/>
            <person name="Yamamoto Y."/>
            <person name="Fujita K."/>
            <person name="Isono K."/>
            <person name="Choi S."/>
            <person name="Ohtsubo E."/>
            <person name="Baba T."/>
            <person name="Wanner B.L."/>
            <person name="Mori H."/>
            <person name="Horiuchi T."/>
        </authorList>
    </citation>
    <scope>NUCLEOTIDE SEQUENCE [LARGE SCALE GENOMIC DNA]</scope>
    <source>
        <strain>K12 / W3110 / ATCC 27325 / DSM 5911</strain>
    </source>
</reference>
<reference key="5">
    <citation type="journal article" date="2005" name="Science">
        <title>Global topology analysis of the Escherichia coli inner membrane proteome.</title>
        <authorList>
            <person name="Daley D.O."/>
            <person name="Rapp M."/>
            <person name="Granseth E."/>
            <person name="Melen K."/>
            <person name="Drew D."/>
            <person name="von Heijne G."/>
        </authorList>
    </citation>
    <scope>SUBCELLULAR LOCATION</scope>
    <scope>TOPOLOGY [LARGE SCALE ANALYSIS]</scope>
    <source>
        <strain>K12 / MG1655 / ATCC 47076</strain>
    </source>
</reference>
<reference key="6">
    <citation type="journal article" date="2011" name="J. Biol. Chem.">
        <title>A novel putrescine importer required for type 1 pili-driven surface motility induced by extracellular putrescine in Escherichia coli K-12.</title>
        <authorList>
            <person name="Kurihara S."/>
            <person name="Suzuki H."/>
            <person name="Oshida M."/>
            <person name="Benno Y."/>
        </authorList>
    </citation>
    <scope>FUNCTION</scope>
    <scope>ACTIVITY REGULATION</scope>
    <scope>BIOPHYSICOCHEMICAL PROPERTIES</scope>
    <scope>GENE NAME</scope>
    <source>
        <strain>K12 / MG1655 / ATCC 47076</strain>
    </source>
</reference>